<dbReference type="EMBL" id="CP000553">
    <property type="protein sequence ID" value="ABM76409.1"/>
    <property type="molecule type" value="Genomic_DNA"/>
</dbReference>
<dbReference type="RefSeq" id="WP_011125758.1">
    <property type="nucleotide sequence ID" value="NC_008819.1"/>
</dbReference>
<dbReference type="SMR" id="A2C4J9"/>
<dbReference type="KEGG" id="pme:NATL1_18531"/>
<dbReference type="eggNOG" id="COG0636">
    <property type="taxonomic scope" value="Bacteria"/>
</dbReference>
<dbReference type="HOGENOM" id="CLU_148047_2_0_3"/>
<dbReference type="Proteomes" id="UP000002592">
    <property type="component" value="Chromosome"/>
</dbReference>
<dbReference type="GO" id="GO:0031676">
    <property type="term" value="C:plasma membrane-derived thylakoid membrane"/>
    <property type="evidence" value="ECO:0007669"/>
    <property type="project" value="UniProtKB-SubCell"/>
</dbReference>
<dbReference type="GO" id="GO:0045259">
    <property type="term" value="C:proton-transporting ATP synthase complex"/>
    <property type="evidence" value="ECO:0007669"/>
    <property type="project" value="UniProtKB-KW"/>
</dbReference>
<dbReference type="GO" id="GO:0033177">
    <property type="term" value="C:proton-transporting two-sector ATPase complex, proton-transporting domain"/>
    <property type="evidence" value="ECO:0007669"/>
    <property type="project" value="InterPro"/>
</dbReference>
<dbReference type="GO" id="GO:0008289">
    <property type="term" value="F:lipid binding"/>
    <property type="evidence" value="ECO:0007669"/>
    <property type="project" value="UniProtKB-KW"/>
</dbReference>
<dbReference type="GO" id="GO:0046933">
    <property type="term" value="F:proton-transporting ATP synthase activity, rotational mechanism"/>
    <property type="evidence" value="ECO:0007669"/>
    <property type="project" value="UniProtKB-UniRule"/>
</dbReference>
<dbReference type="CDD" id="cd18183">
    <property type="entry name" value="ATP-synt_Fo_c_ATPH"/>
    <property type="match status" value="1"/>
</dbReference>
<dbReference type="FunFam" id="1.20.20.10:FF:000001">
    <property type="entry name" value="ATP synthase subunit c, chloroplastic"/>
    <property type="match status" value="1"/>
</dbReference>
<dbReference type="Gene3D" id="1.20.20.10">
    <property type="entry name" value="F1F0 ATP synthase subunit C"/>
    <property type="match status" value="1"/>
</dbReference>
<dbReference type="HAMAP" id="MF_01396">
    <property type="entry name" value="ATP_synth_c_bact"/>
    <property type="match status" value="1"/>
</dbReference>
<dbReference type="InterPro" id="IPR005953">
    <property type="entry name" value="ATP_synth_csu_bac/chlpt"/>
</dbReference>
<dbReference type="InterPro" id="IPR000454">
    <property type="entry name" value="ATP_synth_F0_csu"/>
</dbReference>
<dbReference type="InterPro" id="IPR020537">
    <property type="entry name" value="ATP_synth_F0_csu_DDCD_BS"/>
</dbReference>
<dbReference type="InterPro" id="IPR038662">
    <property type="entry name" value="ATP_synth_F0_csu_sf"/>
</dbReference>
<dbReference type="InterPro" id="IPR002379">
    <property type="entry name" value="ATPase_proteolipid_c-like_dom"/>
</dbReference>
<dbReference type="InterPro" id="IPR035921">
    <property type="entry name" value="F/V-ATP_Csub_sf"/>
</dbReference>
<dbReference type="NCBIfam" id="TIGR01260">
    <property type="entry name" value="ATP_synt_c"/>
    <property type="match status" value="1"/>
</dbReference>
<dbReference type="NCBIfam" id="NF005608">
    <property type="entry name" value="PRK07354.1"/>
    <property type="match status" value="1"/>
</dbReference>
<dbReference type="PANTHER" id="PTHR10031">
    <property type="entry name" value="ATP SYNTHASE LIPID-BINDING PROTEIN, MITOCHONDRIAL"/>
    <property type="match status" value="1"/>
</dbReference>
<dbReference type="PANTHER" id="PTHR10031:SF0">
    <property type="entry name" value="ATPASE PROTEIN 9"/>
    <property type="match status" value="1"/>
</dbReference>
<dbReference type="Pfam" id="PF00137">
    <property type="entry name" value="ATP-synt_C"/>
    <property type="match status" value="1"/>
</dbReference>
<dbReference type="PRINTS" id="PR00124">
    <property type="entry name" value="ATPASEC"/>
</dbReference>
<dbReference type="SUPFAM" id="SSF81333">
    <property type="entry name" value="F1F0 ATP synthase subunit C"/>
    <property type="match status" value="1"/>
</dbReference>
<dbReference type="PROSITE" id="PS00605">
    <property type="entry name" value="ATPASE_C"/>
    <property type="match status" value="1"/>
</dbReference>
<organism>
    <name type="scientific">Prochlorococcus marinus (strain NATL1A)</name>
    <dbReference type="NCBI Taxonomy" id="167555"/>
    <lineage>
        <taxon>Bacteria</taxon>
        <taxon>Bacillati</taxon>
        <taxon>Cyanobacteriota</taxon>
        <taxon>Cyanophyceae</taxon>
        <taxon>Synechococcales</taxon>
        <taxon>Prochlorococcaceae</taxon>
        <taxon>Prochlorococcus</taxon>
    </lineage>
</organism>
<name>ATPL_PROM1</name>
<feature type="chain" id="PRO_0000365918" description="ATP synthase subunit c">
    <location>
        <begin position="1"/>
        <end position="82"/>
    </location>
</feature>
<feature type="transmembrane region" description="Helical" evidence="1">
    <location>
        <begin position="7"/>
        <end position="27"/>
    </location>
</feature>
<feature type="transmembrane region" description="Helical" evidence="1">
    <location>
        <begin position="57"/>
        <end position="77"/>
    </location>
</feature>
<feature type="site" description="Reversibly protonated during proton transport" evidence="1">
    <location>
        <position position="61"/>
    </location>
</feature>
<gene>
    <name evidence="1" type="primary">atpE</name>
    <name evidence="1" type="synonym">atpH</name>
    <name type="ordered locus">NATL1_18531</name>
</gene>
<protein>
    <recommendedName>
        <fullName evidence="1">ATP synthase subunit c</fullName>
    </recommendedName>
    <alternativeName>
        <fullName evidence="1">ATP synthase F(0) sector subunit c</fullName>
    </alternativeName>
    <alternativeName>
        <fullName evidence="1">F-type ATPase subunit c</fullName>
        <shortName evidence="1">F-ATPase subunit c</shortName>
    </alternativeName>
    <alternativeName>
        <fullName evidence="1">Lipid-binding protein</fullName>
    </alternativeName>
</protein>
<reference key="1">
    <citation type="journal article" date="2007" name="PLoS Genet.">
        <title>Patterns and implications of gene gain and loss in the evolution of Prochlorococcus.</title>
        <authorList>
            <person name="Kettler G.C."/>
            <person name="Martiny A.C."/>
            <person name="Huang K."/>
            <person name="Zucker J."/>
            <person name="Coleman M.L."/>
            <person name="Rodrigue S."/>
            <person name="Chen F."/>
            <person name="Lapidus A."/>
            <person name="Ferriera S."/>
            <person name="Johnson J."/>
            <person name="Steglich C."/>
            <person name="Church G.M."/>
            <person name="Richardson P."/>
            <person name="Chisholm S.W."/>
        </authorList>
    </citation>
    <scope>NUCLEOTIDE SEQUENCE [LARGE SCALE GENOMIC DNA]</scope>
    <source>
        <strain>NATL1A</strain>
    </source>
</reference>
<sequence>MDSITTAASVVAAGLAVGLGAIGPGIGQGSAAQGAVEGIARQPEAEGKIRGTLLLSFAFMESLTIYGLVVALVLLFANPFAG</sequence>
<proteinExistence type="inferred from homology"/>
<comment type="function">
    <text evidence="1">F(1)F(0) ATP synthase produces ATP from ADP in the presence of a proton or sodium gradient. F-type ATPases consist of two structural domains, F(1) containing the extramembraneous catalytic core and F(0) containing the membrane proton channel, linked together by a central stalk and a peripheral stalk. During catalysis, ATP synthesis in the catalytic domain of F(1) is coupled via a rotary mechanism of the central stalk subunits to proton translocation.</text>
</comment>
<comment type="function">
    <text evidence="1">Key component of the F(0) channel; it plays a direct role in translocation across the membrane. A homomeric c-ring of between 10-14 subunits forms the central stalk rotor element with the F(1) delta and epsilon subunits.</text>
</comment>
<comment type="subunit">
    <text evidence="1">F-type ATPases have 2 components, F(1) - the catalytic core - and F(0) - the membrane proton channel. F(1) has five subunits: alpha(3), beta(3), gamma(1), delta(1), epsilon(1). F(0) has four main subunits: a(1), b(1), b'(1) and c(10-14). The alpha and beta chains form an alternating ring which encloses part of the gamma chain. F(1) is attached to F(0) by a central stalk formed by the gamma and epsilon chains, while a peripheral stalk is formed by the delta, b and b' chains.</text>
</comment>
<comment type="subcellular location">
    <subcellularLocation>
        <location evidence="1">Cellular thylakoid membrane</location>
        <topology evidence="1">Multi-pass membrane protein</topology>
    </subcellularLocation>
</comment>
<comment type="similarity">
    <text evidence="1">Belongs to the ATPase C chain family.</text>
</comment>
<keyword id="KW-0066">ATP synthesis</keyword>
<keyword id="KW-0138">CF(0)</keyword>
<keyword id="KW-0375">Hydrogen ion transport</keyword>
<keyword id="KW-0406">Ion transport</keyword>
<keyword id="KW-0446">Lipid-binding</keyword>
<keyword id="KW-0472">Membrane</keyword>
<keyword id="KW-0793">Thylakoid</keyword>
<keyword id="KW-0812">Transmembrane</keyword>
<keyword id="KW-1133">Transmembrane helix</keyword>
<keyword id="KW-0813">Transport</keyword>
<evidence type="ECO:0000255" key="1">
    <source>
        <dbReference type="HAMAP-Rule" id="MF_01396"/>
    </source>
</evidence>
<accession>A2C4J9</accession>